<comment type="function">
    <text evidence="1">Catalyzes the specific phosphorylation of the 3-hydroxyl group of shikimic acid using ATP as a cosubstrate.</text>
</comment>
<comment type="catalytic activity">
    <reaction evidence="1">
        <text>shikimate + ATP = 3-phosphoshikimate + ADP + H(+)</text>
        <dbReference type="Rhea" id="RHEA:13121"/>
        <dbReference type="ChEBI" id="CHEBI:15378"/>
        <dbReference type="ChEBI" id="CHEBI:30616"/>
        <dbReference type="ChEBI" id="CHEBI:36208"/>
        <dbReference type="ChEBI" id="CHEBI:145989"/>
        <dbReference type="ChEBI" id="CHEBI:456216"/>
        <dbReference type="EC" id="2.7.1.71"/>
    </reaction>
</comment>
<comment type="cofactor">
    <cofactor evidence="1">
        <name>Mg(2+)</name>
        <dbReference type="ChEBI" id="CHEBI:18420"/>
    </cofactor>
    <text evidence="1">Binds 1 Mg(2+) ion per subunit.</text>
</comment>
<comment type="pathway">
    <text evidence="1">Metabolic intermediate biosynthesis; chorismate biosynthesis; chorismate from D-erythrose 4-phosphate and phosphoenolpyruvate: step 5/7.</text>
</comment>
<comment type="subunit">
    <text evidence="1">Monomer.</text>
</comment>
<comment type="subcellular location">
    <subcellularLocation>
        <location evidence="1">Cytoplasm</location>
    </subcellularLocation>
</comment>
<comment type="similarity">
    <text evidence="1">Belongs to the shikimate kinase family.</text>
</comment>
<name>AROK_THEP3</name>
<gene>
    <name evidence="1" type="primary">aroK</name>
    <name type="ordered locus">Teth39_1080</name>
</gene>
<proteinExistence type="inferred from homology"/>
<protein>
    <recommendedName>
        <fullName evidence="1">Shikimate kinase</fullName>
        <shortName evidence="1">SK</shortName>
        <ecNumber evidence="1">2.7.1.71</ecNumber>
    </recommendedName>
</protein>
<accession>B0K9C2</accession>
<organism>
    <name type="scientific">Thermoanaerobacter pseudethanolicus (strain ATCC 33223 / 39E)</name>
    <name type="common">Clostridium thermohydrosulfuricum</name>
    <dbReference type="NCBI Taxonomy" id="340099"/>
    <lineage>
        <taxon>Bacteria</taxon>
        <taxon>Bacillati</taxon>
        <taxon>Bacillota</taxon>
        <taxon>Clostridia</taxon>
        <taxon>Thermoanaerobacterales</taxon>
        <taxon>Thermoanaerobacteraceae</taxon>
        <taxon>Thermoanaerobacter</taxon>
    </lineage>
</organism>
<feature type="chain" id="PRO_1000094428" description="Shikimate kinase">
    <location>
        <begin position="1"/>
        <end position="171"/>
    </location>
</feature>
<feature type="binding site" evidence="1">
    <location>
        <begin position="11"/>
        <end position="16"/>
    </location>
    <ligand>
        <name>ATP</name>
        <dbReference type="ChEBI" id="CHEBI:30616"/>
    </ligand>
</feature>
<feature type="binding site" evidence="1">
    <location>
        <position position="15"/>
    </location>
    <ligand>
        <name>Mg(2+)</name>
        <dbReference type="ChEBI" id="CHEBI:18420"/>
    </ligand>
</feature>
<feature type="binding site" evidence="1">
    <location>
        <position position="33"/>
    </location>
    <ligand>
        <name>substrate</name>
    </ligand>
</feature>
<feature type="binding site" evidence="1">
    <location>
        <position position="57"/>
    </location>
    <ligand>
        <name>substrate</name>
    </ligand>
</feature>
<feature type="binding site" evidence="1">
    <location>
        <position position="79"/>
    </location>
    <ligand>
        <name>substrate</name>
    </ligand>
</feature>
<feature type="binding site" evidence="1">
    <location>
        <position position="117"/>
    </location>
    <ligand>
        <name>ATP</name>
        <dbReference type="ChEBI" id="CHEBI:30616"/>
    </ligand>
</feature>
<feature type="binding site" evidence="1">
    <location>
        <position position="136"/>
    </location>
    <ligand>
        <name>substrate</name>
    </ligand>
</feature>
<keyword id="KW-0028">Amino-acid biosynthesis</keyword>
<keyword id="KW-0057">Aromatic amino acid biosynthesis</keyword>
<keyword id="KW-0067">ATP-binding</keyword>
<keyword id="KW-0963">Cytoplasm</keyword>
<keyword id="KW-0418">Kinase</keyword>
<keyword id="KW-0460">Magnesium</keyword>
<keyword id="KW-0479">Metal-binding</keyword>
<keyword id="KW-0547">Nucleotide-binding</keyword>
<keyword id="KW-1185">Reference proteome</keyword>
<keyword id="KW-0808">Transferase</keyword>
<sequence>MKNIVLTGFMATGKTTVGKKVATNMSFGFIDTDKMIEKMANMTVSDIFEKYGEDYFRRLEKAAVIKAARLKNFVIATGGGVVLNPSNIVQLRKNGVVICFVARPEIILRNIGKNKDRPLLMVDNPEEKIRQLLKEREPFYRFADYTIDVSDMTIDEVAEEVIKAYIRLKKG</sequence>
<dbReference type="EC" id="2.7.1.71" evidence="1"/>
<dbReference type="EMBL" id="CP000924">
    <property type="protein sequence ID" value="ABY94735.1"/>
    <property type="molecule type" value="Genomic_DNA"/>
</dbReference>
<dbReference type="RefSeq" id="WP_012269303.1">
    <property type="nucleotide sequence ID" value="NC_010321.1"/>
</dbReference>
<dbReference type="SMR" id="B0K9C2"/>
<dbReference type="STRING" id="340099.Teth39_1080"/>
<dbReference type="KEGG" id="tpd:Teth39_1080"/>
<dbReference type="eggNOG" id="COG0703">
    <property type="taxonomic scope" value="Bacteria"/>
</dbReference>
<dbReference type="HOGENOM" id="CLU_057607_4_0_9"/>
<dbReference type="UniPathway" id="UPA00053">
    <property type="reaction ID" value="UER00088"/>
</dbReference>
<dbReference type="Proteomes" id="UP000002156">
    <property type="component" value="Chromosome"/>
</dbReference>
<dbReference type="GO" id="GO:0005829">
    <property type="term" value="C:cytosol"/>
    <property type="evidence" value="ECO:0007669"/>
    <property type="project" value="TreeGrafter"/>
</dbReference>
<dbReference type="GO" id="GO:0005524">
    <property type="term" value="F:ATP binding"/>
    <property type="evidence" value="ECO:0007669"/>
    <property type="project" value="UniProtKB-UniRule"/>
</dbReference>
<dbReference type="GO" id="GO:0000287">
    <property type="term" value="F:magnesium ion binding"/>
    <property type="evidence" value="ECO:0007669"/>
    <property type="project" value="UniProtKB-UniRule"/>
</dbReference>
<dbReference type="GO" id="GO:0004765">
    <property type="term" value="F:shikimate kinase activity"/>
    <property type="evidence" value="ECO:0007669"/>
    <property type="project" value="UniProtKB-UniRule"/>
</dbReference>
<dbReference type="GO" id="GO:0008652">
    <property type="term" value="P:amino acid biosynthetic process"/>
    <property type="evidence" value="ECO:0007669"/>
    <property type="project" value="UniProtKB-KW"/>
</dbReference>
<dbReference type="GO" id="GO:0009073">
    <property type="term" value="P:aromatic amino acid family biosynthetic process"/>
    <property type="evidence" value="ECO:0007669"/>
    <property type="project" value="UniProtKB-KW"/>
</dbReference>
<dbReference type="GO" id="GO:0009423">
    <property type="term" value="P:chorismate biosynthetic process"/>
    <property type="evidence" value="ECO:0007669"/>
    <property type="project" value="UniProtKB-UniRule"/>
</dbReference>
<dbReference type="CDD" id="cd00464">
    <property type="entry name" value="SK"/>
    <property type="match status" value="1"/>
</dbReference>
<dbReference type="Gene3D" id="3.40.50.300">
    <property type="entry name" value="P-loop containing nucleotide triphosphate hydrolases"/>
    <property type="match status" value="1"/>
</dbReference>
<dbReference type="HAMAP" id="MF_00109">
    <property type="entry name" value="Shikimate_kinase"/>
    <property type="match status" value="1"/>
</dbReference>
<dbReference type="InterPro" id="IPR027417">
    <property type="entry name" value="P-loop_NTPase"/>
</dbReference>
<dbReference type="InterPro" id="IPR031322">
    <property type="entry name" value="Shikimate/glucono_kinase"/>
</dbReference>
<dbReference type="InterPro" id="IPR000623">
    <property type="entry name" value="Shikimate_kinase/TSH1"/>
</dbReference>
<dbReference type="InterPro" id="IPR023000">
    <property type="entry name" value="Shikimate_kinase_CS"/>
</dbReference>
<dbReference type="NCBIfam" id="NF010553">
    <property type="entry name" value="PRK13947.1"/>
    <property type="match status" value="1"/>
</dbReference>
<dbReference type="PANTHER" id="PTHR21087">
    <property type="entry name" value="SHIKIMATE KINASE"/>
    <property type="match status" value="1"/>
</dbReference>
<dbReference type="PANTHER" id="PTHR21087:SF16">
    <property type="entry name" value="SHIKIMATE KINASE 1, CHLOROPLASTIC"/>
    <property type="match status" value="1"/>
</dbReference>
<dbReference type="Pfam" id="PF01202">
    <property type="entry name" value="SKI"/>
    <property type="match status" value="1"/>
</dbReference>
<dbReference type="PRINTS" id="PR01100">
    <property type="entry name" value="SHIKIMTKNASE"/>
</dbReference>
<dbReference type="SUPFAM" id="SSF52540">
    <property type="entry name" value="P-loop containing nucleoside triphosphate hydrolases"/>
    <property type="match status" value="1"/>
</dbReference>
<dbReference type="PROSITE" id="PS01128">
    <property type="entry name" value="SHIKIMATE_KINASE"/>
    <property type="match status" value="1"/>
</dbReference>
<evidence type="ECO:0000255" key="1">
    <source>
        <dbReference type="HAMAP-Rule" id="MF_00109"/>
    </source>
</evidence>
<reference key="1">
    <citation type="submission" date="2008-01" db="EMBL/GenBank/DDBJ databases">
        <title>Complete sequence of Thermoanaerobacter pseudethanolicus 39E.</title>
        <authorList>
            <person name="Copeland A."/>
            <person name="Lucas S."/>
            <person name="Lapidus A."/>
            <person name="Barry K."/>
            <person name="Glavina del Rio T."/>
            <person name="Dalin E."/>
            <person name="Tice H."/>
            <person name="Pitluck S."/>
            <person name="Bruce D."/>
            <person name="Goodwin L."/>
            <person name="Saunders E."/>
            <person name="Brettin T."/>
            <person name="Detter J.C."/>
            <person name="Han C."/>
            <person name="Schmutz J."/>
            <person name="Larimer F."/>
            <person name="Land M."/>
            <person name="Hauser L."/>
            <person name="Kyrpides N."/>
            <person name="Lykidis A."/>
            <person name="Hemme C."/>
            <person name="Fields M.W."/>
            <person name="He Z."/>
            <person name="Zhou J."/>
            <person name="Richardson P."/>
        </authorList>
    </citation>
    <scope>NUCLEOTIDE SEQUENCE [LARGE SCALE GENOMIC DNA]</scope>
    <source>
        <strain>ATCC 33223 / DSM 2355 / 39E</strain>
    </source>
</reference>